<organism>
    <name type="scientific">Streptococcus thermophilus (strain ATCC BAA-250 / LMG 18311)</name>
    <dbReference type="NCBI Taxonomy" id="264199"/>
    <lineage>
        <taxon>Bacteria</taxon>
        <taxon>Bacillati</taxon>
        <taxon>Bacillota</taxon>
        <taxon>Bacilli</taxon>
        <taxon>Lactobacillales</taxon>
        <taxon>Streptococcaceae</taxon>
        <taxon>Streptococcus</taxon>
    </lineage>
</organism>
<gene>
    <name evidence="1" type="primary">gatA</name>
    <name type="ordered locus">stu1626</name>
</gene>
<sequence length="488" mass="52124">MSFNNKTIEELHNLLVSKEISATELTQATIDDIKAREEAVNAFVTVAEEAALAQAKAIDEKGIDADNLLSGIPFAVKDNISTDGILTTAASKMLYNYEPIFDATAVANAKAKDMIVIGKTNMDEFAMGGSGETSYYGATKNAWDHSKVPGGSSSGSAAAVASGQVRLSLGSDTGGSIRQPAAFNGIVGLKPTYGTVSRFGLIAFGSSLDQIGTFSQTVKENAQLLNVIASEDAKDSTSAPVRIADFTSKIGQDIKGMKIALPKEYLGEGIDPEVKETILDAAKHFEKLGATVEEVSLPHSKYGVAVYYIIASSEASSNLQRFDGIRYGFRAEDAKNLDDIYVNTRSQGFGDEVKRRIMLGTFSLSSGYYDAYYKKAGQVRTLIIQDFEKVFADYDLILGPTAPSVAFDLDTLNHDPVAMYLADLLTIPVNLAGLPGISIPAGFAQGLPVGLQLIGPKYSEETIYQAAAAFEATTDYHKQQPVIFGGDN</sequence>
<accession>Q5M312</accession>
<comment type="function">
    <text evidence="1">Allows the formation of correctly charged Gln-tRNA(Gln) through the transamidation of misacylated Glu-tRNA(Gln) in organisms which lack glutaminyl-tRNA synthetase. The reaction takes place in the presence of glutamine and ATP through an activated gamma-phospho-Glu-tRNA(Gln).</text>
</comment>
<comment type="catalytic activity">
    <reaction evidence="1">
        <text>L-glutamyl-tRNA(Gln) + L-glutamine + ATP + H2O = L-glutaminyl-tRNA(Gln) + L-glutamate + ADP + phosphate + H(+)</text>
        <dbReference type="Rhea" id="RHEA:17521"/>
        <dbReference type="Rhea" id="RHEA-COMP:9681"/>
        <dbReference type="Rhea" id="RHEA-COMP:9684"/>
        <dbReference type="ChEBI" id="CHEBI:15377"/>
        <dbReference type="ChEBI" id="CHEBI:15378"/>
        <dbReference type="ChEBI" id="CHEBI:29985"/>
        <dbReference type="ChEBI" id="CHEBI:30616"/>
        <dbReference type="ChEBI" id="CHEBI:43474"/>
        <dbReference type="ChEBI" id="CHEBI:58359"/>
        <dbReference type="ChEBI" id="CHEBI:78520"/>
        <dbReference type="ChEBI" id="CHEBI:78521"/>
        <dbReference type="ChEBI" id="CHEBI:456216"/>
        <dbReference type="EC" id="6.3.5.7"/>
    </reaction>
</comment>
<comment type="subunit">
    <text evidence="1">Heterotrimer of A, B and C subunits.</text>
</comment>
<comment type="similarity">
    <text evidence="1">Belongs to the amidase family. GatA subfamily.</text>
</comment>
<reference key="1">
    <citation type="journal article" date="2004" name="Nat. Biotechnol.">
        <title>Complete sequence and comparative genome analysis of the dairy bacterium Streptococcus thermophilus.</title>
        <authorList>
            <person name="Bolotin A."/>
            <person name="Quinquis B."/>
            <person name="Renault P."/>
            <person name="Sorokin A."/>
            <person name="Ehrlich S.D."/>
            <person name="Kulakauskas S."/>
            <person name="Lapidus A."/>
            <person name="Goltsman E."/>
            <person name="Mazur M."/>
            <person name="Pusch G.D."/>
            <person name="Fonstein M."/>
            <person name="Overbeek R."/>
            <person name="Kyprides N."/>
            <person name="Purnelle B."/>
            <person name="Prozzi D."/>
            <person name="Ngui K."/>
            <person name="Masuy D."/>
            <person name="Hancy F."/>
            <person name="Burteau S."/>
            <person name="Boutry M."/>
            <person name="Delcour J."/>
            <person name="Goffeau A."/>
            <person name="Hols P."/>
        </authorList>
    </citation>
    <scope>NUCLEOTIDE SEQUENCE [LARGE SCALE GENOMIC DNA]</scope>
    <source>
        <strain>ATCC BAA-250 / LMG 18311</strain>
    </source>
</reference>
<name>GATA_STRT2</name>
<protein>
    <recommendedName>
        <fullName evidence="1">Glutamyl-tRNA(Gln) amidotransferase subunit A</fullName>
        <shortName evidence="1">Glu-ADT subunit A</shortName>
        <ecNumber evidence="1">6.3.5.7</ecNumber>
    </recommendedName>
</protein>
<proteinExistence type="inferred from homology"/>
<evidence type="ECO:0000255" key="1">
    <source>
        <dbReference type="HAMAP-Rule" id="MF_00120"/>
    </source>
</evidence>
<feature type="chain" id="PRO_0000241161" description="Glutamyl-tRNA(Gln) amidotransferase subunit A">
    <location>
        <begin position="1"/>
        <end position="488"/>
    </location>
</feature>
<feature type="active site" description="Charge relay system" evidence="1">
    <location>
        <position position="77"/>
    </location>
</feature>
<feature type="active site" description="Charge relay system" evidence="1">
    <location>
        <position position="152"/>
    </location>
</feature>
<feature type="active site" description="Acyl-ester intermediate" evidence="1">
    <location>
        <position position="176"/>
    </location>
</feature>
<dbReference type="EC" id="6.3.5.7" evidence="1"/>
<dbReference type="EMBL" id="CP000023">
    <property type="protein sequence ID" value="AAV61229.1"/>
    <property type="molecule type" value="Genomic_DNA"/>
</dbReference>
<dbReference type="RefSeq" id="WP_002946584.1">
    <property type="nucleotide sequence ID" value="NC_006448.1"/>
</dbReference>
<dbReference type="SMR" id="Q5M312"/>
<dbReference type="STRING" id="264199.stu1626"/>
<dbReference type="GeneID" id="66899373"/>
<dbReference type="KEGG" id="stl:stu1626"/>
<dbReference type="eggNOG" id="COG0154">
    <property type="taxonomic scope" value="Bacteria"/>
</dbReference>
<dbReference type="HOGENOM" id="CLU_009600_0_3_9"/>
<dbReference type="Proteomes" id="UP000001170">
    <property type="component" value="Chromosome"/>
</dbReference>
<dbReference type="GO" id="GO:0030956">
    <property type="term" value="C:glutamyl-tRNA(Gln) amidotransferase complex"/>
    <property type="evidence" value="ECO:0007669"/>
    <property type="project" value="InterPro"/>
</dbReference>
<dbReference type="GO" id="GO:0005524">
    <property type="term" value="F:ATP binding"/>
    <property type="evidence" value="ECO:0007669"/>
    <property type="project" value="UniProtKB-KW"/>
</dbReference>
<dbReference type="GO" id="GO:0050567">
    <property type="term" value="F:glutaminyl-tRNA synthase (glutamine-hydrolyzing) activity"/>
    <property type="evidence" value="ECO:0007669"/>
    <property type="project" value="UniProtKB-UniRule"/>
</dbReference>
<dbReference type="GO" id="GO:0006412">
    <property type="term" value="P:translation"/>
    <property type="evidence" value="ECO:0007669"/>
    <property type="project" value="UniProtKB-UniRule"/>
</dbReference>
<dbReference type="Gene3D" id="3.90.1300.10">
    <property type="entry name" value="Amidase signature (AS) domain"/>
    <property type="match status" value="1"/>
</dbReference>
<dbReference type="HAMAP" id="MF_00120">
    <property type="entry name" value="GatA"/>
    <property type="match status" value="1"/>
</dbReference>
<dbReference type="InterPro" id="IPR000120">
    <property type="entry name" value="Amidase"/>
</dbReference>
<dbReference type="InterPro" id="IPR020556">
    <property type="entry name" value="Amidase_CS"/>
</dbReference>
<dbReference type="InterPro" id="IPR023631">
    <property type="entry name" value="Amidase_dom"/>
</dbReference>
<dbReference type="InterPro" id="IPR036928">
    <property type="entry name" value="AS_sf"/>
</dbReference>
<dbReference type="InterPro" id="IPR004412">
    <property type="entry name" value="GatA"/>
</dbReference>
<dbReference type="NCBIfam" id="TIGR00132">
    <property type="entry name" value="gatA"/>
    <property type="match status" value="1"/>
</dbReference>
<dbReference type="PANTHER" id="PTHR11895:SF151">
    <property type="entry name" value="GLUTAMYL-TRNA(GLN) AMIDOTRANSFERASE SUBUNIT A"/>
    <property type="match status" value="1"/>
</dbReference>
<dbReference type="PANTHER" id="PTHR11895">
    <property type="entry name" value="TRANSAMIDASE"/>
    <property type="match status" value="1"/>
</dbReference>
<dbReference type="Pfam" id="PF01425">
    <property type="entry name" value="Amidase"/>
    <property type="match status" value="1"/>
</dbReference>
<dbReference type="SUPFAM" id="SSF75304">
    <property type="entry name" value="Amidase signature (AS) enzymes"/>
    <property type="match status" value="1"/>
</dbReference>
<dbReference type="PROSITE" id="PS00571">
    <property type="entry name" value="AMIDASES"/>
    <property type="match status" value="1"/>
</dbReference>
<keyword id="KW-0067">ATP-binding</keyword>
<keyword id="KW-0436">Ligase</keyword>
<keyword id="KW-0547">Nucleotide-binding</keyword>
<keyword id="KW-0648">Protein biosynthesis</keyword>
<keyword id="KW-1185">Reference proteome</keyword>